<keyword id="KW-0496">Mitochondrion</keyword>
<keyword id="KW-0687">Ribonucleoprotein</keyword>
<keyword id="KW-0689">Ribosomal protein</keyword>
<dbReference type="EMBL" id="M68929">
    <property type="protein sequence ID" value="AAC09425.1"/>
    <property type="molecule type" value="Genomic_DNA"/>
</dbReference>
<dbReference type="PIR" id="S25984">
    <property type="entry name" value="S25984"/>
</dbReference>
<dbReference type="RefSeq" id="NP_054428.1">
    <property type="nucleotide sequence ID" value="NC_001660.1"/>
</dbReference>
<dbReference type="GeneID" id="2702477"/>
<dbReference type="GO" id="GO:0005739">
    <property type="term" value="C:mitochondrion"/>
    <property type="evidence" value="ECO:0007669"/>
    <property type="project" value="UniProtKB-SubCell"/>
</dbReference>
<dbReference type="GO" id="GO:1990904">
    <property type="term" value="C:ribonucleoprotein complex"/>
    <property type="evidence" value="ECO:0007669"/>
    <property type="project" value="UniProtKB-KW"/>
</dbReference>
<dbReference type="GO" id="GO:0005840">
    <property type="term" value="C:ribosome"/>
    <property type="evidence" value="ECO:0007669"/>
    <property type="project" value="UniProtKB-KW"/>
</dbReference>
<dbReference type="InterPro" id="IPR035104">
    <property type="entry name" value="Ribosomal_protein_S1-like"/>
</dbReference>
<dbReference type="PRINTS" id="PR00681">
    <property type="entry name" value="RIBOSOMALS1"/>
</dbReference>
<accession>P26863</accession>
<geneLocation type="mitochondrion"/>
<comment type="subcellular location">
    <subcellularLocation>
        <location>Mitochondrion</location>
    </subcellularLocation>
</comment>
<comment type="similarity">
    <text evidence="2">Belongs to the bacterial ribosomal protein bS1 family.</text>
</comment>
<organism>
    <name type="scientific">Marchantia polymorpha</name>
    <name type="common">Common liverwort</name>
    <name type="synonym">Marchantia aquatica</name>
    <dbReference type="NCBI Taxonomy" id="3197"/>
    <lineage>
        <taxon>Eukaryota</taxon>
        <taxon>Viridiplantae</taxon>
        <taxon>Streptophyta</taxon>
        <taxon>Embryophyta</taxon>
        <taxon>Marchantiophyta</taxon>
        <taxon>Marchantiopsida</taxon>
        <taxon>Marchantiidae</taxon>
        <taxon>Marchantiales</taxon>
        <taxon>Marchantiaceae</taxon>
        <taxon>Marchantia</taxon>
    </lineage>
</organism>
<gene>
    <name type="primary">RPS1</name>
</gene>
<reference key="1">
    <citation type="journal article" date="1992" name="J. Mol. Biol.">
        <title>Gene organization deduced from the complete sequence of liverwort Marchantia polymorpha mitochondrial DNA. A primitive form of plant mitochondrial genome.</title>
        <authorList>
            <person name="Oda K."/>
            <person name="Yamato K."/>
            <person name="Ohta E."/>
            <person name="Nakamura Y."/>
            <person name="Takemura M."/>
            <person name="Nozato N."/>
            <person name="Akashi K."/>
            <person name="Kanegae T."/>
            <person name="Ogura Y."/>
            <person name="Kohchi T."/>
            <person name="Ohyama K."/>
        </authorList>
    </citation>
    <scope>NUCLEOTIDE SEQUENCE [GENOMIC DNA]</scope>
</reference>
<reference key="2">
    <citation type="journal article" date="1992" name="Nucleic Acids Res.">
        <title>Gene clusters for ribosomal proteins in the mitochondrial genome of a liverwort, Marchantia polymorpha.</title>
        <authorList>
            <person name="Takemura M."/>
            <person name="Oda K."/>
            <person name="Yamato K."/>
            <person name="Ohta E."/>
            <person name="Nakamura Y."/>
            <person name="Nozato N."/>
            <person name="Akashi K."/>
            <person name="Ohyama K."/>
        </authorList>
    </citation>
    <scope>NUCLEOTIDE SEQUENCE [GENOMIC DNA]</scope>
</reference>
<evidence type="ECO:0000256" key="1">
    <source>
        <dbReference type="SAM" id="MobiDB-lite"/>
    </source>
</evidence>
<evidence type="ECO:0000305" key="2"/>
<proteinExistence type="inferred from homology"/>
<name>RT01_MARPO</name>
<sequence length="270" mass="31099">MSFSQLFPKYNSSFNPLRGSAIQCSVIQLQQNKVLVDTGLKTPIICFQHELKRVPITKQARFHFGIEDVEVFGEPKMLLPKPLEIKCKRKLVWIELTKIWRSDQNLVKGFILNSVKGGYAVAIAGYIAFLPKSLLRSRKVFYSQWRIFSILNMKPKISNIVVKEIGDGKIDYFSPTKSHQKQTKYLGAKLKHWRNMKKNTNVKKKYIFSEKVPTTKKTKQGFKHLGPKPLAYTEKKRETTKQSTKNNVFQLKDQGQGKSLVFVDVLTQSS</sequence>
<feature type="chain" id="PRO_0000196060" description="Small ribosomal subunit protein bS1m">
    <location>
        <begin position="1"/>
        <end position="270"/>
    </location>
</feature>
<feature type="region of interest" description="Disordered" evidence="1">
    <location>
        <begin position="218"/>
        <end position="250"/>
    </location>
</feature>
<protein>
    <recommendedName>
        <fullName evidence="2">Small ribosomal subunit protein bS1m</fullName>
    </recommendedName>
    <alternativeName>
        <fullName>Ribosomal protein S1, mitochondrial</fullName>
    </alternativeName>
</protein>